<evidence type="ECO:0000250" key="1">
    <source>
        <dbReference type="UniProtKB" id="Q3UWY1"/>
    </source>
</evidence>
<evidence type="ECO:0000305" key="2"/>
<evidence type="ECO:0000312" key="3">
    <source>
        <dbReference type="HGNC" id="HGNC:24074"/>
    </source>
</evidence>
<dbReference type="EMBL" id="AC244216">
    <property type="status" value="NOT_ANNOTATED_CDS"/>
    <property type="molecule type" value="Genomic_DNA"/>
</dbReference>
<dbReference type="EMBL" id="BC144565">
    <property type="protein sequence ID" value="AAI44566.1"/>
    <property type="molecule type" value="mRNA"/>
</dbReference>
<dbReference type="CCDS" id="CCDS72709.1"/>
<dbReference type="RefSeq" id="NP_001012276.2">
    <property type="nucleotide sequence ID" value="NM_001012276.3"/>
</dbReference>
<dbReference type="RefSeq" id="XP_016856758.1">
    <property type="nucleotide sequence ID" value="XM_017001269.2"/>
</dbReference>
<dbReference type="RefSeq" id="XP_054184596.1">
    <property type="nucleotide sequence ID" value="XM_054328621.1"/>
</dbReference>
<dbReference type="RefSeq" id="XP_054187834.1">
    <property type="nucleotide sequence ID" value="XM_054331859.1"/>
</dbReference>
<dbReference type="RefSeq" id="XP_054187954.1">
    <property type="nucleotide sequence ID" value="XM_054331979.1"/>
</dbReference>
<dbReference type="RefSeq" id="XP_054192509.1">
    <property type="nucleotide sequence ID" value="XM_054336534.1"/>
</dbReference>
<dbReference type="SMR" id="Q5VWM4"/>
<dbReference type="FunCoup" id="Q5VWM4">
    <property type="interactions" value="74"/>
</dbReference>
<dbReference type="IntAct" id="Q5VWM4">
    <property type="interactions" value="1"/>
</dbReference>
<dbReference type="STRING" id="9606.ENSP00000349931"/>
<dbReference type="iPTMnet" id="Q5VWM4"/>
<dbReference type="PhosphoSitePlus" id="Q5VWM4"/>
<dbReference type="BioMuta" id="PRAMEF8"/>
<dbReference type="DMDM" id="74756937"/>
<dbReference type="MassIVE" id="Q5VWM4"/>
<dbReference type="PaxDb" id="9606-ENSP00000349931"/>
<dbReference type="PeptideAtlas" id="Q5VWM4"/>
<dbReference type="Pumba" id="Q5VWM4"/>
<dbReference type="Antibodypedia" id="68110">
    <property type="antibodies" value="52 antibodies from 10 providers"/>
</dbReference>
<dbReference type="DNASU" id="391002"/>
<dbReference type="Ensembl" id="ENST00000357367.7">
    <property type="protein sequence ID" value="ENSP00000349931.2"/>
    <property type="gene ID" value="ENSG00000182330.11"/>
</dbReference>
<dbReference type="Ensembl" id="ENST00000611408.1">
    <property type="protein sequence ID" value="ENSP00000478860.1"/>
    <property type="gene ID" value="ENSG00000278021.4"/>
</dbReference>
<dbReference type="Ensembl" id="ENST00000616484.4">
    <property type="protein sequence ID" value="ENSP00000480509.1"/>
    <property type="gene ID" value="ENSG00000278021.4"/>
</dbReference>
<dbReference type="Ensembl" id="ENST00000621519.5">
    <property type="protein sequence ID" value="ENSP00000484753.1"/>
    <property type="gene ID" value="ENSG00000182330.11"/>
</dbReference>
<dbReference type="Ensembl" id="ENST00000631760.1">
    <property type="protein sequence ID" value="ENSP00000488367.1"/>
    <property type="gene ID" value="ENSG00000282583.1"/>
</dbReference>
<dbReference type="Ensembl" id="ENST00000632222.1">
    <property type="protein sequence ID" value="ENSP00000488892.1"/>
    <property type="gene ID" value="ENSG00000282583.1"/>
</dbReference>
<dbReference type="Ensembl" id="ENST00000632952.1">
    <property type="protein sequence ID" value="ENSP00000488817.1"/>
    <property type="gene ID" value="ENSG00000282583.1"/>
</dbReference>
<dbReference type="Ensembl" id="ENST00000636073.2">
    <property type="protein sequence ID" value="ENSP00000490581.1"/>
    <property type="gene ID" value="ENSG00000283387.2"/>
</dbReference>
<dbReference type="Ensembl" id="ENST00000637989.2">
    <property type="protein sequence ID" value="ENSP00000490790.1"/>
    <property type="gene ID" value="ENSG00000283387.2"/>
</dbReference>
<dbReference type="GeneID" id="391002"/>
<dbReference type="KEGG" id="hsa:391002"/>
<dbReference type="MANE-Select" id="ENST00000357367.7">
    <property type="protein sequence ID" value="ENSP00000349931.2"/>
    <property type="RefSeq nucleotide sequence ID" value="NM_001012276.3"/>
    <property type="RefSeq protein sequence ID" value="NP_001012276.2"/>
</dbReference>
<dbReference type="UCSC" id="uc031tpu.2">
    <property type="organism name" value="human"/>
</dbReference>
<dbReference type="UCSC" id="uc031tpv.2">
    <property type="organism name" value="human"/>
</dbReference>
<dbReference type="AGR" id="HGNC:24074"/>
<dbReference type="CTD" id="391002"/>
<dbReference type="GeneCards" id="PRAMEF8"/>
<dbReference type="HGNC" id="HGNC:24074">
    <property type="gene designation" value="PRAMEF8"/>
</dbReference>
<dbReference type="HPA" id="ENSG00000182330">
    <property type="expression patterns" value="Not detected"/>
</dbReference>
<dbReference type="neXtProt" id="NX_Q5VWM4"/>
<dbReference type="OpenTargets" id="ENSG00000182330"/>
<dbReference type="PharmGKB" id="PA142671145"/>
<dbReference type="VEuPathDB" id="HostDB:ENSG00000182330"/>
<dbReference type="eggNOG" id="ENOG502QWSJ">
    <property type="taxonomic scope" value="Eukaryota"/>
</dbReference>
<dbReference type="GeneTree" id="ENSGT01030000234531"/>
<dbReference type="HOGENOM" id="CLU_039635_2_1_1"/>
<dbReference type="InParanoid" id="Q5VWM4"/>
<dbReference type="OMA" id="CTHMEPI"/>
<dbReference type="OrthoDB" id="9515160at2759"/>
<dbReference type="PAN-GO" id="Q5VWM4">
    <property type="GO annotations" value="1 GO annotation based on evolutionary models"/>
</dbReference>
<dbReference type="TreeFam" id="TF332708"/>
<dbReference type="PathwayCommons" id="Q5VWM4"/>
<dbReference type="BioGRID-ORCS" id="391002">
    <property type="hits" value="16 hits in 1093 CRISPR screens"/>
</dbReference>
<dbReference type="GenomeRNAi" id="391002"/>
<dbReference type="Pharos" id="Q5VWM4">
    <property type="development level" value="Tdark"/>
</dbReference>
<dbReference type="PRO" id="PR:Q5VWM4"/>
<dbReference type="Proteomes" id="UP000005640">
    <property type="component" value="Chromosome 1"/>
</dbReference>
<dbReference type="RNAct" id="Q5VWM4">
    <property type="molecule type" value="protein"/>
</dbReference>
<dbReference type="Bgee" id="ENSG00000182330">
    <property type="expression patterns" value="Expressed in liver and 3 other cell types or tissues"/>
</dbReference>
<dbReference type="GO" id="GO:0031462">
    <property type="term" value="C:Cul2-RING ubiquitin ligase complex"/>
    <property type="evidence" value="ECO:0000318"/>
    <property type="project" value="GO_Central"/>
</dbReference>
<dbReference type="GO" id="GO:0005737">
    <property type="term" value="C:cytoplasm"/>
    <property type="evidence" value="ECO:0000318"/>
    <property type="project" value="GO_Central"/>
</dbReference>
<dbReference type="GO" id="GO:1990756">
    <property type="term" value="F:ubiquitin-like ligase-substrate adaptor activity"/>
    <property type="evidence" value="ECO:0000318"/>
    <property type="project" value="GO_Central"/>
</dbReference>
<dbReference type="GO" id="GO:0043066">
    <property type="term" value="P:negative regulation of apoptotic process"/>
    <property type="evidence" value="ECO:0007669"/>
    <property type="project" value="InterPro"/>
</dbReference>
<dbReference type="GO" id="GO:0045596">
    <property type="term" value="P:negative regulation of cell differentiation"/>
    <property type="evidence" value="ECO:0007669"/>
    <property type="project" value="InterPro"/>
</dbReference>
<dbReference type="GO" id="GO:0045892">
    <property type="term" value="P:negative regulation of DNA-templated transcription"/>
    <property type="evidence" value="ECO:0007669"/>
    <property type="project" value="InterPro"/>
</dbReference>
<dbReference type="GO" id="GO:0008284">
    <property type="term" value="P:positive regulation of cell population proliferation"/>
    <property type="evidence" value="ECO:0007669"/>
    <property type="project" value="InterPro"/>
</dbReference>
<dbReference type="GO" id="GO:0043161">
    <property type="term" value="P:proteasome-mediated ubiquitin-dependent protein catabolic process"/>
    <property type="evidence" value="ECO:0000318"/>
    <property type="project" value="GO_Central"/>
</dbReference>
<dbReference type="FunFam" id="3.80.10.10:FF:000079">
    <property type="entry name" value="PRAME family member 18"/>
    <property type="match status" value="1"/>
</dbReference>
<dbReference type="Gene3D" id="3.80.10.10">
    <property type="entry name" value="Ribonuclease Inhibitor"/>
    <property type="match status" value="1"/>
</dbReference>
<dbReference type="InterPro" id="IPR032675">
    <property type="entry name" value="LRR_dom_sf"/>
</dbReference>
<dbReference type="InterPro" id="IPR026271">
    <property type="entry name" value="PRAME"/>
</dbReference>
<dbReference type="InterPro" id="IPR050694">
    <property type="entry name" value="PRAME_domain"/>
</dbReference>
<dbReference type="PANTHER" id="PTHR14224:SF30">
    <property type="entry name" value="PRAME FAMILY MEMBER 7-RELATED"/>
    <property type="match status" value="1"/>
</dbReference>
<dbReference type="PANTHER" id="PTHR14224">
    <property type="entry name" value="SIMILAR TO PREFERENTIALLY EXPRESSED ANTIGEN IN MELANOMA-LIKE 3"/>
    <property type="match status" value="1"/>
</dbReference>
<dbReference type="PIRSF" id="PIRSF038286">
    <property type="entry name" value="PRAME"/>
    <property type="match status" value="1"/>
</dbReference>
<dbReference type="SUPFAM" id="SSF52047">
    <property type="entry name" value="RNI-like"/>
    <property type="match status" value="1"/>
</dbReference>
<feature type="chain" id="PRO_0000156982" description="PRAME family member 8">
    <location>
        <begin position="1"/>
        <end position="474"/>
    </location>
</feature>
<feature type="repeat" description="LRR 1; degenerate" evidence="1">
    <location>
        <begin position="97"/>
        <end position="122"/>
    </location>
</feature>
<feature type="repeat" description="LRR 2; degenerate" evidence="1">
    <location>
        <begin position="177"/>
        <end position="201"/>
    </location>
</feature>
<feature type="repeat" description="LRR 3; degenerate" evidence="1">
    <location>
        <begin position="202"/>
        <end position="228"/>
    </location>
</feature>
<feature type="repeat" description="LRR 4; degenerate" evidence="1">
    <location>
        <begin position="229"/>
        <end position="264"/>
    </location>
</feature>
<feature type="repeat" description="LRR 5" evidence="1">
    <location>
        <begin position="265"/>
        <end position="290"/>
    </location>
</feature>
<feature type="repeat" description="LRR 6" evidence="1">
    <location>
        <begin position="291"/>
        <end position="322"/>
    </location>
</feature>
<feature type="repeat" description="LRR 7" evidence="1">
    <location>
        <begin position="323"/>
        <end position="341"/>
    </location>
</feature>
<feature type="repeat" description="LRR 8" evidence="1">
    <location>
        <begin position="347"/>
        <end position="374"/>
    </location>
</feature>
<feature type="repeat" description="LRR 9" evidence="1">
    <location>
        <begin position="375"/>
        <end position="399"/>
    </location>
</feature>
<protein>
    <recommendedName>
        <fullName evidence="3">PRAME family member 8</fullName>
    </recommendedName>
</protein>
<proteinExistence type="evidence at transcript level"/>
<accession>Q5VWM4</accession>
<accession>A6NMC2</accession>
<accession>B7ZMI5</accession>
<gene>
    <name evidence="3" type="primary">PRAMEF8</name>
    <name type="synonym">PRAMEF24</name>
</gene>
<organism>
    <name type="scientific">Homo sapiens</name>
    <name type="common">Human</name>
    <dbReference type="NCBI Taxonomy" id="9606"/>
    <lineage>
        <taxon>Eukaryota</taxon>
        <taxon>Metazoa</taxon>
        <taxon>Chordata</taxon>
        <taxon>Craniata</taxon>
        <taxon>Vertebrata</taxon>
        <taxon>Euteleostomi</taxon>
        <taxon>Mammalia</taxon>
        <taxon>Eutheria</taxon>
        <taxon>Euarchontoglires</taxon>
        <taxon>Primates</taxon>
        <taxon>Haplorrhini</taxon>
        <taxon>Catarrhini</taxon>
        <taxon>Hominidae</taxon>
        <taxon>Homo</taxon>
    </lineage>
</organism>
<keyword id="KW-0433">Leucine-rich repeat</keyword>
<keyword id="KW-1185">Reference proteome</keyword>
<keyword id="KW-0677">Repeat</keyword>
<sequence>MSIRAPPRLLELARQRLLRDQALAISTMEELPRELFPTLFMEAFSRRRCETLKTMVQAWPFTRLPLGSLMKSPHLESLKSVLEGVDVLLTQEVRPRQSKLQVLDLRNVDENFCDIFSGATASFPEALSQKQTADNCPGTGRQQPFMVFIDLCLKNRTLDECLTHLLEWGKQRKGLLHVCCKELQVFGMPIHSIIEVLNMVELDCIQEVEVCCPWELSTLVKFAPYLGQMRNLRKLVLFNIRASACIPPDNKGQFIARFTSQFLKLDYFQNLSMHSVSFLEGHLDQLLRCLQASLEMVVMTDCLLSESDLKHLSWCPSIRQLKELDLRGVTLTHFSPEPLTGLLEQVVATLQTLDLEDCGIMDSQLSAILPVLSRCSQLSTFSFCGNLISMAALENLLRHTVGLSKLSLELYPAPLESYDTQGALCWGRFAELGAELMNTLRDLRQPKIIVFCTVPCPRCGIRASYDLEPSHCLC</sequence>
<name>PRAM8_HUMAN</name>
<comment type="similarity">
    <text evidence="2">Belongs to the PRAME family.</text>
</comment>
<reference key="1">
    <citation type="journal article" date="2006" name="Nature">
        <title>The DNA sequence and biological annotation of human chromosome 1.</title>
        <authorList>
            <person name="Gregory S.G."/>
            <person name="Barlow K.F."/>
            <person name="McLay K.E."/>
            <person name="Kaul R."/>
            <person name="Swarbreck D."/>
            <person name="Dunham A."/>
            <person name="Scott C.E."/>
            <person name="Howe K.L."/>
            <person name="Woodfine K."/>
            <person name="Spencer C.C.A."/>
            <person name="Jones M.C."/>
            <person name="Gillson C."/>
            <person name="Searle S."/>
            <person name="Zhou Y."/>
            <person name="Kokocinski F."/>
            <person name="McDonald L."/>
            <person name="Evans R."/>
            <person name="Phillips K."/>
            <person name="Atkinson A."/>
            <person name="Cooper R."/>
            <person name="Jones C."/>
            <person name="Hall R.E."/>
            <person name="Andrews T.D."/>
            <person name="Lloyd C."/>
            <person name="Ainscough R."/>
            <person name="Almeida J.P."/>
            <person name="Ambrose K.D."/>
            <person name="Anderson F."/>
            <person name="Andrew R.W."/>
            <person name="Ashwell R.I.S."/>
            <person name="Aubin K."/>
            <person name="Babbage A.K."/>
            <person name="Bagguley C.L."/>
            <person name="Bailey J."/>
            <person name="Beasley H."/>
            <person name="Bethel G."/>
            <person name="Bird C.P."/>
            <person name="Bray-Allen S."/>
            <person name="Brown J.Y."/>
            <person name="Brown A.J."/>
            <person name="Buckley D."/>
            <person name="Burton J."/>
            <person name="Bye J."/>
            <person name="Carder C."/>
            <person name="Chapman J.C."/>
            <person name="Clark S.Y."/>
            <person name="Clarke G."/>
            <person name="Clee C."/>
            <person name="Cobley V."/>
            <person name="Collier R.E."/>
            <person name="Corby N."/>
            <person name="Coville G.J."/>
            <person name="Davies J."/>
            <person name="Deadman R."/>
            <person name="Dunn M."/>
            <person name="Earthrowl M."/>
            <person name="Ellington A.G."/>
            <person name="Errington H."/>
            <person name="Frankish A."/>
            <person name="Frankland J."/>
            <person name="French L."/>
            <person name="Garner P."/>
            <person name="Garnett J."/>
            <person name="Gay L."/>
            <person name="Ghori M.R.J."/>
            <person name="Gibson R."/>
            <person name="Gilby L.M."/>
            <person name="Gillett W."/>
            <person name="Glithero R.J."/>
            <person name="Grafham D.V."/>
            <person name="Griffiths C."/>
            <person name="Griffiths-Jones S."/>
            <person name="Grocock R."/>
            <person name="Hammond S."/>
            <person name="Harrison E.S.I."/>
            <person name="Hart E."/>
            <person name="Haugen E."/>
            <person name="Heath P.D."/>
            <person name="Holmes S."/>
            <person name="Holt K."/>
            <person name="Howden P.J."/>
            <person name="Hunt A.R."/>
            <person name="Hunt S.E."/>
            <person name="Hunter G."/>
            <person name="Isherwood J."/>
            <person name="James R."/>
            <person name="Johnson C."/>
            <person name="Johnson D."/>
            <person name="Joy A."/>
            <person name="Kay M."/>
            <person name="Kershaw J.K."/>
            <person name="Kibukawa M."/>
            <person name="Kimberley A.M."/>
            <person name="King A."/>
            <person name="Knights A.J."/>
            <person name="Lad H."/>
            <person name="Laird G."/>
            <person name="Lawlor S."/>
            <person name="Leongamornlert D.A."/>
            <person name="Lloyd D.M."/>
            <person name="Loveland J."/>
            <person name="Lovell J."/>
            <person name="Lush M.J."/>
            <person name="Lyne R."/>
            <person name="Martin S."/>
            <person name="Mashreghi-Mohammadi M."/>
            <person name="Matthews L."/>
            <person name="Matthews N.S.W."/>
            <person name="McLaren S."/>
            <person name="Milne S."/>
            <person name="Mistry S."/>
            <person name="Moore M.J.F."/>
            <person name="Nickerson T."/>
            <person name="O'Dell C.N."/>
            <person name="Oliver K."/>
            <person name="Palmeiri A."/>
            <person name="Palmer S.A."/>
            <person name="Parker A."/>
            <person name="Patel D."/>
            <person name="Pearce A.V."/>
            <person name="Peck A.I."/>
            <person name="Pelan S."/>
            <person name="Phelps K."/>
            <person name="Phillimore B.J."/>
            <person name="Plumb R."/>
            <person name="Rajan J."/>
            <person name="Raymond C."/>
            <person name="Rouse G."/>
            <person name="Saenphimmachak C."/>
            <person name="Sehra H.K."/>
            <person name="Sheridan E."/>
            <person name="Shownkeen R."/>
            <person name="Sims S."/>
            <person name="Skuce C.D."/>
            <person name="Smith M."/>
            <person name="Steward C."/>
            <person name="Subramanian S."/>
            <person name="Sycamore N."/>
            <person name="Tracey A."/>
            <person name="Tromans A."/>
            <person name="Van Helmond Z."/>
            <person name="Wall M."/>
            <person name="Wallis J.M."/>
            <person name="White S."/>
            <person name="Whitehead S.L."/>
            <person name="Wilkinson J.E."/>
            <person name="Willey D.L."/>
            <person name="Williams H."/>
            <person name="Wilming L."/>
            <person name="Wray P.W."/>
            <person name="Wu Z."/>
            <person name="Coulson A."/>
            <person name="Vaudin M."/>
            <person name="Sulston J.E."/>
            <person name="Durbin R.M."/>
            <person name="Hubbard T."/>
            <person name="Wooster R."/>
            <person name="Dunham I."/>
            <person name="Carter N.P."/>
            <person name="McVean G."/>
            <person name="Ross M.T."/>
            <person name="Harrow J."/>
            <person name="Olson M.V."/>
            <person name="Beck S."/>
            <person name="Rogers J."/>
            <person name="Bentley D.R."/>
        </authorList>
    </citation>
    <scope>NUCLEOTIDE SEQUENCE [LARGE SCALE GENOMIC DNA]</scope>
</reference>
<reference key="2">
    <citation type="journal article" date="2004" name="Genome Res.">
        <title>The status, quality, and expansion of the NIH full-length cDNA project: the Mammalian Gene Collection (MGC).</title>
        <authorList>
            <consortium name="The MGC Project Team"/>
        </authorList>
    </citation>
    <scope>NUCLEOTIDE SEQUENCE [LARGE SCALE MRNA]</scope>
</reference>